<proteinExistence type="inferred from homology"/>
<gene>
    <name evidence="1" type="primary">secM</name>
    <name type="ordered locus">ECDH10B_0079</name>
</gene>
<accession>B1XC74</accession>
<dbReference type="EMBL" id="CP000948">
    <property type="protein sequence ID" value="ACB01278.1"/>
    <property type="molecule type" value="Genomic_DNA"/>
</dbReference>
<dbReference type="RefSeq" id="WP_000014321.1">
    <property type="nucleotide sequence ID" value="NC_010473.1"/>
</dbReference>
<dbReference type="SMR" id="B1XC74"/>
<dbReference type="GeneID" id="93777337"/>
<dbReference type="KEGG" id="ecd:ECDH10B_0079"/>
<dbReference type="HOGENOM" id="CLU_108853_0_0_6"/>
<dbReference type="GO" id="GO:0005829">
    <property type="term" value="C:cytosol"/>
    <property type="evidence" value="ECO:0007669"/>
    <property type="project" value="UniProtKB-SubCell"/>
</dbReference>
<dbReference type="GO" id="GO:0042597">
    <property type="term" value="C:periplasmic space"/>
    <property type="evidence" value="ECO:0007669"/>
    <property type="project" value="UniProtKB-SubCell"/>
</dbReference>
<dbReference type="GO" id="GO:0045182">
    <property type="term" value="F:translation regulator activity"/>
    <property type="evidence" value="ECO:0007669"/>
    <property type="project" value="InterPro"/>
</dbReference>
<dbReference type="HAMAP" id="MF_01332">
    <property type="entry name" value="SecM"/>
    <property type="match status" value="1"/>
</dbReference>
<dbReference type="InterPro" id="IPR009502">
    <property type="entry name" value="SecM"/>
</dbReference>
<dbReference type="NCBIfam" id="NF002799">
    <property type="entry name" value="PRK02943.1-1"/>
    <property type="match status" value="1"/>
</dbReference>
<dbReference type="Pfam" id="PF06558">
    <property type="entry name" value="SecM"/>
    <property type="match status" value="1"/>
</dbReference>
<dbReference type="PIRSF" id="PIRSF004572">
    <property type="entry name" value="SecM"/>
    <property type="match status" value="1"/>
</dbReference>
<comment type="function">
    <text evidence="1">Regulates secA expression by translational coupling of the secM secA operon. Translational pausing at a specific Pro residue 5 residues before the end of the protein may allow disruption of a mRNA repressor helix that normally suppresses secA translation initiation.</text>
</comment>
<comment type="subcellular location">
    <subcellularLocation>
        <location evidence="1">Cytoplasm</location>
        <location evidence="1">Cytosol</location>
    </subcellularLocation>
    <subcellularLocation>
        <location evidence="1">Periplasm</location>
    </subcellularLocation>
    <text evidence="1">The active form is cytosolic, while the periplasmic form is rapidly degraded, mainly by the tail-specific protease.</text>
</comment>
<comment type="similarity">
    <text evidence="1">Belongs to the SecM family.</text>
</comment>
<feature type="signal peptide" evidence="1">
    <location>
        <begin position="1"/>
        <end position="37"/>
    </location>
</feature>
<feature type="chain" id="PRO_1000142337" description="Secretion monitor">
    <location>
        <begin position="38"/>
        <end position="170"/>
    </location>
</feature>
<sequence>MSGILTRWRQFGKRYFWPHLLLGMVAASLGLPALSNAAEPNAPAKATTRNHEPSAKVNFGQLALLEANTRRPNSNYSVDYWHQHAIRTVIRHLSFAMAPQTLPVAEESLPLQAQHLALLDTLSALLTQEGTPSEKGYRIDYAHFTPQAKFSTPVWISQAQGIRAGPQRLT</sequence>
<reference key="1">
    <citation type="journal article" date="2008" name="J. Bacteriol.">
        <title>The complete genome sequence of Escherichia coli DH10B: insights into the biology of a laboratory workhorse.</title>
        <authorList>
            <person name="Durfee T."/>
            <person name="Nelson R."/>
            <person name="Baldwin S."/>
            <person name="Plunkett G. III"/>
            <person name="Burland V."/>
            <person name="Mau B."/>
            <person name="Petrosino J.F."/>
            <person name="Qin X."/>
            <person name="Muzny D.M."/>
            <person name="Ayele M."/>
            <person name="Gibbs R.A."/>
            <person name="Csorgo B."/>
            <person name="Posfai G."/>
            <person name="Weinstock G.M."/>
            <person name="Blattner F.R."/>
        </authorList>
    </citation>
    <scope>NUCLEOTIDE SEQUENCE [LARGE SCALE GENOMIC DNA]</scope>
    <source>
        <strain>K12 / DH10B</strain>
    </source>
</reference>
<protein>
    <recommendedName>
        <fullName evidence="1">Secretion monitor</fullName>
    </recommendedName>
</protein>
<organism>
    <name type="scientific">Escherichia coli (strain K12 / DH10B)</name>
    <dbReference type="NCBI Taxonomy" id="316385"/>
    <lineage>
        <taxon>Bacteria</taxon>
        <taxon>Pseudomonadati</taxon>
        <taxon>Pseudomonadota</taxon>
        <taxon>Gammaproteobacteria</taxon>
        <taxon>Enterobacterales</taxon>
        <taxon>Enterobacteriaceae</taxon>
        <taxon>Escherichia</taxon>
    </lineage>
</organism>
<name>SECM_ECODH</name>
<evidence type="ECO:0000255" key="1">
    <source>
        <dbReference type="HAMAP-Rule" id="MF_01332"/>
    </source>
</evidence>
<keyword id="KW-0963">Cytoplasm</keyword>
<keyword id="KW-0574">Periplasm</keyword>
<keyword id="KW-0732">Signal</keyword>